<accession>Q8W110</accession>
<accession>Q9FLW3</accession>
<evidence type="ECO:0000250" key="1"/>
<evidence type="ECO:0000255" key="2"/>
<evidence type="ECO:0000255" key="3">
    <source>
        <dbReference type="PROSITE-ProRule" id="PRU00716"/>
    </source>
</evidence>
<evidence type="ECO:0000269" key="4">
    <source>
    </source>
</evidence>
<evidence type="ECO:0000269" key="5">
    <source>
    </source>
</evidence>
<evidence type="ECO:0000269" key="6">
    <source>
    </source>
</evidence>
<evidence type="ECO:0000305" key="7"/>
<sequence>MGNMRSLVKTLMVVLFLGWILVWIMISTNLFKSKWTPKLSKYLNTTYFGPQGTNLVLLTVPMMFIAVLSCVYLHIQKKPTQPQREWKLKRIMGRVIMVMNPLGIVTATELTFSLLFVALLAWSLYNYLYLSYHVHLHNDDNAKIWQAKFRAFGLRIGYVGNICWAFLFFPVTRASTILPLVGLTSESSIKYHIWLGHVSNFCFLVHTVVFLIYWAMINKLMETFAWNPTYVPNLAGTIAMVIGIAMWVTSLPSFRRKKFEIFFYTHHLYGLYIVFYVIHVGDSWFCMILPNIFLFFIDRYLRFLQSTKRSRLVSARILPSDNLELTFSKTPGLHYTPTSILFLHVPSISKIQWHPFTITSSSNLEKDTLSVVIRRQGSWTQKLYTHLSSSIDSLEVSTEGPYGPNSFDVSRHNSLILVSGGSGITPFISVIRELISQSQNKSTKLPDVLLVCSFKHYHDLAFLDLIFPLDMSASDISRLNLRIEAYITREDKKPETTDDHRLLQTKWFKPQPLDSPISPVLGPNNFLWLGVVILSSFVMFLLLIGIVTRYYIYPVDHNTGSIYNFSYRGLWDMFLGSACIFISSSVVFLWRKKQNKEGDKEFKNQVQSVEFQTPTSSPGSWFHGHERELESVPYQSIVQATSVHFGSKPNLKKILLEAEGSEDVGVMVCGPRKMRHEVAKICSSGLAKNLHFEAISFNW</sequence>
<dbReference type="EC" id="1.16.1.7"/>
<dbReference type="EMBL" id="AB009056">
    <property type="protein sequence ID" value="BAB08721.1"/>
    <property type="status" value="ALT_SEQ"/>
    <property type="molecule type" value="Genomic_DNA"/>
</dbReference>
<dbReference type="EMBL" id="CP002688">
    <property type="protein sequence ID" value="AED93241.1"/>
    <property type="molecule type" value="Genomic_DNA"/>
</dbReference>
<dbReference type="EMBL" id="AF462813">
    <property type="protein sequence ID" value="AAL58904.1"/>
    <property type="molecule type" value="mRNA"/>
</dbReference>
<dbReference type="EMBL" id="BT010474">
    <property type="protein sequence ID" value="AAQ65097.1"/>
    <property type="molecule type" value="mRNA"/>
</dbReference>
<dbReference type="RefSeq" id="NP_197786.2">
    <property type="nucleotide sequence ID" value="NM_122303.3"/>
</dbReference>
<dbReference type="SMR" id="Q8W110"/>
<dbReference type="BioGRID" id="17738">
    <property type="interactions" value="2"/>
</dbReference>
<dbReference type="FunCoup" id="Q8W110">
    <property type="interactions" value="77"/>
</dbReference>
<dbReference type="STRING" id="3702.Q8W110"/>
<dbReference type="iPTMnet" id="Q8W110"/>
<dbReference type="PaxDb" id="3702-AT5G23980.1"/>
<dbReference type="ProteomicsDB" id="230044"/>
<dbReference type="EnsemblPlants" id="AT5G23980.1">
    <property type="protein sequence ID" value="AT5G23980.1"/>
    <property type="gene ID" value="AT5G23980"/>
</dbReference>
<dbReference type="GeneID" id="832463"/>
<dbReference type="Gramene" id="AT5G23980.1">
    <property type="protein sequence ID" value="AT5G23980.1"/>
    <property type="gene ID" value="AT5G23980"/>
</dbReference>
<dbReference type="KEGG" id="ath:AT5G23980"/>
<dbReference type="Araport" id="AT5G23980"/>
<dbReference type="TAIR" id="AT5G23980">
    <property type="gene designation" value="FRO4"/>
</dbReference>
<dbReference type="eggNOG" id="KOG0039">
    <property type="taxonomic scope" value="Eukaryota"/>
</dbReference>
<dbReference type="HOGENOM" id="CLU_014777_1_0_1"/>
<dbReference type="InParanoid" id="Q8W110"/>
<dbReference type="OMA" id="YRGLWDM"/>
<dbReference type="PhylomeDB" id="Q8W110"/>
<dbReference type="BioCyc" id="ARA:AT5G23980-MONOMER"/>
<dbReference type="PRO" id="PR:Q8W110"/>
<dbReference type="Proteomes" id="UP000006548">
    <property type="component" value="Chromosome 5"/>
</dbReference>
<dbReference type="ExpressionAtlas" id="Q8W110">
    <property type="expression patterns" value="baseline and differential"/>
</dbReference>
<dbReference type="GO" id="GO:0016020">
    <property type="term" value="C:membrane"/>
    <property type="evidence" value="ECO:0007669"/>
    <property type="project" value="UniProtKB-SubCell"/>
</dbReference>
<dbReference type="GO" id="GO:0140618">
    <property type="term" value="F:ferric-chelate reductase (NADH) activity"/>
    <property type="evidence" value="ECO:0007669"/>
    <property type="project" value="UniProtKB-EC"/>
</dbReference>
<dbReference type="GO" id="GO:0000293">
    <property type="term" value="F:ferric-chelate reductase activity"/>
    <property type="evidence" value="ECO:0000314"/>
    <property type="project" value="TAIR"/>
</dbReference>
<dbReference type="GO" id="GO:0046872">
    <property type="term" value="F:metal ion binding"/>
    <property type="evidence" value="ECO:0007669"/>
    <property type="project" value="UniProtKB-KW"/>
</dbReference>
<dbReference type="GO" id="GO:0006811">
    <property type="term" value="P:monoatomic ion transport"/>
    <property type="evidence" value="ECO:0007669"/>
    <property type="project" value="UniProtKB-KW"/>
</dbReference>
<dbReference type="CDD" id="cd06186">
    <property type="entry name" value="NOX_Duox_like_FAD_NADP"/>
    <property type="match status" value="1"/>
</dbReference>
<dbReference type="FunFam" id="3.40.50.80:FF:000039">
    <property type="entry name" value="Ferric reduction oxidase 3"/>
    <property type="match status" value="1"/>
</dbReference>
<dbReference type="FunFam" id="3.40.50.80:FF:000048">
    <property type="entry name" value="Ferric reduction oxidase 5"/>
    <property type="match status" value="1"/>
</dbReference>
<dbReference type="Gene3D" id="3.40.50.80">
    <property type="entry name" value="Nucleotide-binding domain of ferredoxin-NADP reductase (FNR) module"/>
    <property type="match status" value="2"/>
</dbReference>
<dbReference type="InterPro" id="IPR000778">
    <property type="entry name" value="Cyt_b245_heavy_chain"/>
</dbReference>
<dbReference type="InterPro" id="IPR013112">
    <property type="entry name" value="FAD-bd_8"/>
</dbReference>
<dbReference type="InterPro" id="IPR017927">
    <property type="entry name" value="FAD-bd_FR_type"/>
</dbReference>
<dbReference type="InterPro" id="IPR013130">
    <property type="entry name" value="Fe3_Rdtase_TM_dom"/>
</dbReference>
<dbReference type="InterPro" id="IPR013121">
    <property type="entry name" value="Fe_red_NAD-bd_6"/>
</dbReference>
<dbReference type="InterPro" id="IPR039261">
    <property type="entry name" value="FNR_nucleotide-bd"/>
</dbReference>
<dbReference type="InterPro" id="IPR050369">
    <property type="entry name" value="RBOH/FRE"/>
</dbReference>
<dbReference type="InterPro" id="IPR017938">
    <property type="entry name" value="Riboflavin_synthase-like_b-brl"/>
</dbReference>
<dbReference type="PANTHER" id="PTHR11972:SF79">
    <property type="entry name" value="FERRIC REDUCTION OXIDASE 4-RELATED"/>
    <property type="match status" value="1"/>
</dbReference>
<dbReference type="PANTHER" id="PTHR11972">
    <property type="entry name" value="NADPH OXIDASE"/>
    <property type="match status" value="1"/>
</dbReference>
<dbReference type="Pfam" id="PF08022">
    <property type="entry name" value="FAD_binding_8"/>
    <property type="match status" value="1"/>
</dbReference>
<dbReference type="Pfam" id="PF01794">
    <property type="entry name" value="Ferric_reduct"/>
    <property type="match status" value="1"/>
</dbReference>
<dbReference type="Pfam" id="PF08030">
    <property type="entry name" value="NAD_binding_6"/>
    <property type="match status" value="1"/>
</dbReference>
<dbReference type="PRINTS" id="PR00466">
    <property type="entry name" value="GP91PHOX"/>
</dbReference>
<dbReference type="SFLD" id="SFLDS00052">
    <property type="entry name" value="Ferric_Reductase_Domain"/>
    <property type="match status" value="1"/>
</dbReference>
<dbReference type="SFLD" id="SFLDG01168">
    <property type="entry name" value="Ferric_reductase_subgroup_(FRE"/>
    <property type="match status" value="1"/>
</dbReference>
<dbReference type="SUPFAM" id="SSF52343">
    <property type="entry name" value="Ferredoxin reductase-like, C-terminal NADP-linked domain"/>
    <property type="match status" value="1"/>
</dbReference>
<dbReference type="SUPFAM" id="SSF63380">
    <property type="entry name" value="Riboflavin synthase domain-like"/>
    <property type="match status" value="1"/>
</dbReference>
<dbReference type="PROSITE" id="PS51384">
    <property type="entry name" value="FAD_FR"/>
    <property type="match status" value="1"/>
</dbReference>
<feature type="chain" id="PRO_0000413202" description="Ferric reduction oxidase 4">
    <location>
        <begin position="1"/>
        <end position="699"/>
    </location>
</feature>
<feature type="topological domain" description="Cytoplasmic" evidence="2">
    <location>
        <begin position="1"/>
        <end position="9"/>
    </location>
</feature>
<feature type="transmembrane region" description="Helical" evidence="1">
    <location>
        <begin position="10"/>
        <end position="29"/>
    </location>
</feature>
<feature type="topological domain" description="Lumenal" evidence="2">
    <location>
        <begin position="30"/>
        <end position="54"/>
    </location>
</feature>
<feature type="transmembrane region" description="Helical" evidence="1">
    <location>
        <begin position="55"/>
        <end position="73"/>
    </location>
</feature>
<feature type="topological domain" description="Cytoplasmic" evidence="2">
    <location>
        <begin position="74"/>
        <end position="101"/>
    </location>
</feature>
<feature type="transmembrane region" description="Helical" evidence="1">
    <location>
        <begin position="102"/>
        <end position="125"/>
    </location>
</feature>
<feature type="topological domain" description="Lumenal" evidence="2">
    <location>
        <begin position="126"/>
        <end position="190"/>
    </location>
</feature>
<feature type="transmembrane region" description="Helical" evidence="1">
    <location>
        <begin position="191"/>
        <end position="214"/>
    </location>
</feature>
<feature type="topological domain" description="Cytoplasmic" evidence="2">
    <location>
        <begin position="215"/>
        <end position="264"/>
    </location>
</feature>
<feature type="transmembrane region" description="Helical" evidence="1">
    <location>
        <begin position="265"/>
        <end position="289"/>
    </location>
</feature>
<feature type="topological domain" description="Lumenal" evidence="2">
    <location>
        <begin position="290"/>
        <end position="311"/>
    </location>
</feature>
<feature type="transmembrane region" description="Helical" evidence="1">
    <location>
        <begin position="312"/>
        <end position="332"/>
    </location>
</feature>
<feature type="topological domain" description="Cytoplasmic" evidence="2">
    <location>
        <begin position="333"/>
        <end position="525"/>
    </location>
</feature>
<feature type="transmembrane region" description="Helical" evidence="1">
    <location>
        <begin position="526"/>
        <end position="548"/>
    </location>
</feature>
<feature type="topological domain" description="Lumenal" evidence="2">
    <location>
        <begin position="549"/>
        <end position="568"/>
    </location>
</feature>
<feature type="transmembrane region" description="Helical" evidence="1">
    <location>
        <begin position="569"/>
        <end position="590"/>
    </location>
</feature>
<feature type="topological domain" description="Cytoplasmic" evidence="2">
    <location>
        <begin position="591"/>
        <end position="699"/>
    </location>
</feature>
<feature type="domain" description="Ferric oxidoreductase">
    <location>
        <begin position="157"/>
        <end position="275"/>
    </location>
</feature>
<feature type="domain" description="FAD-binding FR-type" evidence="3">
    <location>
        <begin position="305"/>
        <end position="408"/>
    </location>
</feature>
<feature type="binding site" description="axial binding residue" evidence="1">
    <location>
        <position position="192"/>
    </location>
    <ligand>
        <name>heme</name>
        <dbReference type="ChEBI" id="CHEBI:30413"/>
    </ligand>
    <ligandPart>
        <name>Fe</name>
        <dbReference type="ChEBI" id="CHEBI:18248"/>
    </ligandPart>
</feature>
<feature type="binding site" description="axial binding residue" evidence="1">
    <location>
        <position position="206"/>
    </location>
    <ligand>
        <name>heme</name>
        <dbReference type="ChEBI" id="CHEBI:30413"/>
    </ligand>
    <ligandPart>
        <name>Fe</name>
        <dbReference type="ChEBI" id="CHEBI:18248"/>
    </ligandPart>
</feature>
<feature type="binding site" description="axial binding residue" evidence="1">
    <location>
        <position position="266"/>
    </location>
    <ligand>
        <name>heme</name>
        <dbReference type="ChEBI" id="CHEBI:30413"/>
    </ligand>
    <ligandPart>
        <name>Fe</name>
        <dbReference type="ChEBI" id="CHEBI:18248"/>
    </ligandPart>
</feature>
<feature type="binding site" description="axial binding residue" evidence="1">
    <location>
        <position position="279"/>
    </location>
    <ligand>
        <name>heme</name>
        <dbReference type="ChEBI" id="CHEBI:30413"/>
    </ligand>
    <ligandPart>
        <name>Fe</name>
        <dbReference type="ChEBI" id="CHEBI:18248"/>
    </ligandPart>
</feature>
<feature type="binding site" evidence="2">
    <location>
        <begin position="354"/>
        <end position="357"/>
    </location>
    <ligand>
        <name>FAD</name>
        <dbReference type="ChEBI" id="CHEBI:57692"/>
    </ligand>
</feature>
<feature type="binding site" evidence="2">
    <location>
        <begin position="400"/>
        <end position="403"/>
    </location>
    <ligand>
        <name>NAD(+)</name>
        <dbReference type="ChEBI" id="CHEBI:57540"/>
    </ligand>
</feature>
<comment type="function">
    <text evidence="4 6">Ferric chelate reductase. May participate in the transport of electrons to a Fe(3+) ion via FAD and heme intermediates (PubMed:16006655). May function as root surface cupric chelate reductase and participate in the reduction of Cu(2+), for Cu(+) acquisition via Cu(+) transporters in response to copper deficiency (PubMed:22374396).</text>
</comment>
<comment type="catalytic activity">
    <reaction>
        <text>2 a Fe(II)-siderophore + NAD(+) + H(+) = 2 a Fe(III)-siderophore + NADH</text>
        <dbReference type="Rhea" id="RHEA:15061"/>
        <dbReference type="Rhea" id="RHEA-COMP:11342"/>
        <dbReference type="Rhea" id="RHEA-COMP:11344"/>
        <dbReference type="ChEBI" id="CHEBI:15378"/>
        <dbReference type="ChEBI" id="CHEBI:29033"/>
        <dbReference type="ChEBI" id="CHEBI:29034"/>
        <dbReference type="ChEBI" id="CHEBI:57540"/>
        <dbReference type="ChEBI" id="CHEBI:57945"/>
        <dbReference type="EC" id="1.16.1.7"/>
    </reaction>
</comment>
<comment type="cofactor">
    <cofactor evidence="7">
        <name>FAD</name>
        <dbReference type="ChEBI" id="CHEBI:57692"/>
    </cofactor>
</comment>
<comment type="subcellular location">
    <subcellularLocation>
        <location evidence="7">Membrane</location>
        <topology evidence="7">Multi-pass membrane protein</topology>
    </subcellularLocation>
</comment>
<comment type="tissue specificity">
    <text evidence="4 5">Expressed in siliques. Detected at low levels in roots, cotyledon veins and shoots.</text>
</comment>
<comment type="induction">
    <text evidence="6">Induced by copper deficiency in a SPL7-dependent manner.</text>
</comment>
<comment type="similarity">
    <text evidence="7">Belongs to the ferric reductase (FRE) family.</text>
</comment>
<comment type="sequence caution" evidence="7">
    <conflict type="erroneous gene model prediction">
        <sequence resource="EMBL-CDS" id="BAB08721"/>
    </conflict>
</comment>
<keyword id="KW-0249">Electron transport</keyword>
<keyword id="KW-0274">FAD</keyword>
<keyword id="KW-0285">Flavoprotein</keyword>
<keyword id="KW-0349">Heme</keyword>
<keyword id="KW-0406">Ion transport</keyword>
<keyword id="KW-0408">Iron</keyword>
<keyword id="KW-0472">Membrane</keyword>
<keyword id="KW-0479">Metal-binding</keyword>
<keyword id="KW-0520">NAD</keyword>
<keyword id="KW-0560">Oxidoreductase</keyword>
<keyword id="KW-1185">Reference proteome</keyword>
<keyword id="KW-0812">Transmembrane</keyword>
<keyword id="KW-1133">Transmembrane helix</keyword>
<keyword id="KW-0813">Transport</keyword>
<organism>
    <name type="scientific">Arabidopsis thaliana</name>
    <name type="common">Mouse-ear cress</name>
    <dbReference type="NCBI Taxonomy" id="3702"/>
    <lineage>
        <taxon>Eukaryota</taxon>
        <taxon>Viridiplantae</taxon>
        <taxon>Streptophyta</taxon>
        <taxon>Embryophyta</taxon>
        <taxon>Tracheophyta</taxon>
        <taxon>Spermatophyta</taxon>
        <taxon>Magnoliopsida</taxon>
        <taxon>eudicotyledons</taxon>
        <taxon>Gunneridae</taxon>
        <taxon>Pentapetalae</taxon>
        <taxon>rosids</taxon>
        <taxon>malvids</taxon>
        <taxon>Brassicales</taxon>
        <taxon>Brassicaceae</taxon>
        <taxon>Camelineae</taxon>
        <taxon>Arabidopsis</taxon>
    </lineage>
</organism>
<protein>
    <recommendedName>
        <fullName>Ferric reduction oxidase 4</fullName>
        <shortName>AtFRO4</shortName>
        <ecNumber>1.16.1.7</ecNumber>
    </recommendedName>
    <alternativeName>
        <fullName>Ferric-chelate reductase 4</fullName>
    </alternativeName>
</protein>
<reference key="1">
    <citation type="journal article" date="2005" name="Plant Cell Physiol.">
        <title>Molecular and biochemical characterization of the Fe(III) chelate reductase gene family in Arabidopsis thaliana.</title>
        <authorList>
            <person name="Wu H."/>
            <person name="Li L."/>
            <person name="Du J."/>
            <person name="Yuan Y."/>
            <person name="Cheng X."/>
            <person name="Ling H.Q."/>
        </authorList>
    </citation>
    <scope>NUCLEOTIDE SEQUENCE [MRNA]</scope>
    <scope>FUNCTION</scope>
    <scope>TISSUE SPECIFICITY</scope>
</reference>
<reference key="2">
    <citation type="journal article" date="1998" name="DNA Res.">
        <title>Structural analysis of Arabidopsis thaliana chromosome 5. IV. Sequence features of the regions of 1,456,315 bp covered by nineteen physically assigned P1 and TAC clones.</title>
        <authorList>
            <person name="Sato S."/>
            <person name="Kaneko T."/>
            <person name="Kotani H."/>
            <person name="Nakamura Y."/>
            <person name="Asamizu E."/>
            <person name="Miyajima N."/>
            <person name="Tabata S."/>
        </authorList>
    </citation>
    <scope>NUCLEOTIDE SEQUENCE [LARGE SCALE GENOMIC DNA]</scope>
    <source>
        <strain>cv. Columbia</strain>
    </source>
</reference>
<reference key="3">
    <citation type="journal article" date="2017" name="Plant J.">
        <title>Araport11: a complete reannotation of the Arabidopsis thaliana reference genome.</title>
        <authorList>
            <person name="Cheng C.Y."/>
            <person name="Krishnakumar V."/>
            <person name="Chan A.P."/>
            <person name="Thibaud-Nissen F."/>
            <person name="Schobel S."/>
            <person name="Town C.D."/>
        </authorList>
    </citation>
    <scope>GENOME REANNOTATION</scope>
    <source>
        <strain>cv. Columbia</strain>
    </source>
</reference>
<reference key="4">
    <citation type="journal article" date="2003" name="Science">
        <title>Empirical analysis of transcriptional activity in the Arabidopsis genome.</title>
        <authorList>
            <person name="Yamada K."/>
            <person name="Lim J."/>
            <person name="Dale J.M."/>
            <person name="Chen H."/>
            <person name="Shinn P."/>
            <person name="Palm C.J."/>
            <person name="Southwick A.M."/>
            <person name="Wu H.C."/>
            <person name="Kim C.J."/>
            <person name="Nguyen M."/>
            <person name="Pham P.K."/>
            <person name="Cheuk R.F."/>
            <person name="Karlin-Newmann G."/>
            <person name="Liu S.X."/>
            <person name="Lam B."/>
            <person name="Sakano H."/>
            <person name="Wu T."/>
            <person name="Yu G."/>
            <person name="Miranda M."/>
            <person name="Quach H.L."/>
            <person name="Tripp M."/>
            <person name="Chang C.H."/>
            <person name="Lee J.M."/>
            <person name="Toriumi M.J."/>
            <person name="Chan M.M."/>
            <person name="Tang C.C."/>
            <person name="Onodera C.S."/>
            <person name="Deng J.M."/>
            <person name="Akiyama K."/>
            <person name="Ansari Y."/>
            <person name="Arakawa T."/>
            <person name="Banh J."/>
            <person name="Banno F."/>
            <person name="Bowser L."/>
            <person name="Brooks S.Y."/>
            <person name="Carninci P."/>
            <person name="Chao Q."/>
            <person name="Choy N."/>
            <person name="Enju A."/>
            <person name="Goldsmith A.D."/>
            <person name="Gurjal M."/>
            <person name="Hansen N.F."/>
            <person name="Hayashizaki Y."/>
            <person name="Johnson-Hopson C."/>
            <person name="Hsuan V.W."/>
            <person name="Iida K."/>
            <person name="Karnes M."/>
            <person name="Khan S."/>
            <person name="Koesema E."/>
            <person name="Ishida J."/>
            <person name="Jiang P.X."/>
            <person name="Jones T."/>
            <person name="Kawai J."/>
            <person name="Kamiya A."/>
            <person name="Meyers C."/>
            <person name="Nakajima M."/>
            <person name="Narusaka M."/>
            <person name="Seki M."/>
            <person name="Sakurai T."/>
            <person name="Satou M."/>
            <person name="Tamse R."/>
            <person name="Vaysberg M."/>
            <person name="Wallender E.K."/>
            <person name="Wong C."/>
            <person name="Yamamura Y."/>
            <person name="Yuan S."/>
            <person name="Shinozaki K."/>
            <person name="Davis R.W."/>
            <person name="Theologis A."/>
            <person name="Ecker J.R."/>
        </authorList>
    </citation>
    <scope>NUCLEOTIDE SEQUENCE [LARGE SCALE MRNA]</scope>
    <source>
        <strain>cv. Columbia</strain>
    </source>
</reference>
<reference key="5">
    <citation type="journal article" date="2006" name="Planta">
        <title>Expression profiling of the Arabidopsis ferric chelate reductase (FRO) gene family reveals differential regulation by iron and copper.</title>
        <authorList>
            <person name="Mukherjee I."/>
            <person name="Campbell N.H."/>
            <person name="Ash J.S."/>
            <person name="Connolly E.L."/>
        </authorList>
    </citation>
    <scope>TISSUE SPECIFICITY</scope>
</reference>
<reference key="6">
    <citation type="journal article" date="2009" name="Plant Sci.">
        <title>Iron uptake mechanisms in plants: Functions of the FRO family of ferric reductases.</title>
        <authorList>
            <person name="Jeong J."/>
            <person name="Connolly E.L."/>
        </authorList>
    </citation>
    <scope>GENE FAMILY</scope>
    <scope>NOMENCLATURE</scope>
</reference>
<reference key="7">
    <citation type="journal article" date="2012" name="Plant Cell">
        <title>Transcriptome sequencing identifies SPL7-regulated copper acquisition genes FRO4/FRO5 and the copper dependence of iron homeostasis in Arabidopsis.</title>
        <authorList>
            <person name="Bernal M."/>
            <person name="Casero D."/>
            <person name="Singh V."/>
            <person name="Wilson G.T."/>
            <person name="Grande A."/>
            <person name="Yang H."/>
            <person name="Dodani S.C."/>
            <person name="Pellegrini M."/>
            <person name="Huijser P."/>
            <person name="Connolly E.L."/>
            <person name="Merchant S.S."/>
            <person name="Kraemer U."/>
        </authorList>
    </citation>
    <scope>FUNCTION</scope>
    <scope>INDUCTION BY COPPER DEFICIENCY</scope>
</reference>
<name>FRO4_ARATH</name>
<proteinExistence type="evidence at transcript level"/>
<gene>
    <name type="primary">FRO4</name>
    <name type="ordered locus">At5g23980</name>
    <name type="ORF">MZF18.140</name>
</gene>